<feature type="chain" id="PRO_0000441208" description="Transporter aclS">
    <location>
        <begin position="1"/>
        <end position="607"/>
    </location>
</feature>
<feature type="transmembrane region" description="Helical" evidence="1">
    <location>
        <begin position="67"/>
        <end position="87"/>
    </location>
</feature>
<feature type="transmembrane region" description="Helical" evidence="1">
    <location>
        <begin position="91"/>
        <end position="111"/>
    </location>
</feature>
<feature type="transmembrane region" description="Helical" evidence="1">
    <location>
        <begin position="152"/>
        <end position="172"/>
    </location>
</feature>
<feature type="transmembrane region" description="Helical" evidence="1">
    <location>
        <begin position="192"/>
        <end position="212"/>
    </location>
</feature>
<feature type="transmembrane region" description="Helical" evidence="1">
    <location>
        <begin position="221"/>
        <end position="241"/>
    </location>
</feature>
<feature type="transmembrane region" description="Helical" evidence="1">
    <location>
        <begin position="262"/>
        <end position="282"/>
    </location>
</feature>
<feature type="transmembrane region" description="Helical" evidence="1">
    <location>
        <begin position="317"/>
        <end position="337"/>
    </location>
</feature>
<feature type="transmembrane region" description="Helical" evidence="1">
    <location>
        <begin position="364"/>
        <end position="384"/>
    </location>
</feature>
<feature type="transmembrane region" description="Helical" evidence="1">
    <location>
        <begin position="423"/>
        <end position="443"/>
    </location>
</feature>
<feature type="transmembrane region" description="Helical" evidence="1">
    <location>
        <begin position="445"/>
        <end position="465"/>
    </location>
</feature>
<feature type="transmembrane region" description="Helical" evidence="1">
    <location>
        <begin position="500"/>
        <end position="520"/>
    </location>
</feature>
<feature type="transmembrane region" description="Helical" evidence="1">
    <location>
        <begin position="531"/>
        <end position="551"/>
    </location>
</feature>
<feature type="region of interest" description="Disordered" evidence="2">
    <location>
        <begin position="583"/>
        <end position="607"/>
    </location>
</feature>
<feature type="compositionally biased region" description="Basic and acidic residues" evidence="2">
    <location>
        <begin position="592"/>
        <end position="607"/>
    </location>
</feature>
<keyword id="KW-0472">Membrane</keyword>
<keyword id="KW-1185">Reference proteome</keyword>
<keyword id="KW-0812">Transmembrane</keyword>
<keyword id="KW-1133">Transmembrane helix</keyword>
<keyword id="KW-0813">Transport</keyword>
<sequence>MTTVIRYGTRLEHLHEAVKLSPHGQTALSVWINDDIRPLPPSRRTWSTMTFIGWWSVWQLSLTNWQLGGSLVASSLSVWQTMVAVVLGRTIAAIVAILIGYIGAEWHIGFPVYSRAIWGVFPYSCHRTVPRQSNVGVILKGAFFPTLLRIGLTVVGFAFQSYTGGLCVTAILSGIFPTFFRMSNTLPASAHVTTQQIIGWAIFNIISIPVLYRRPERSEKLMIGMNIMSFAALLGIMIWSLSHAHGAGDLIHQPSQLQTSDSLGFGIMQGITTVVGTLSIALSRSPFVYPYLKYVSDLDSASQMDFSRFARKPSDQVFGQWFTFIIIGSIMPLFGCLTSSATQAIYGEALWNPPTILAISTSRAAAVFAGIGLVSSQLALNVVDNGKSSPSQSVKGFSNYPVGYSVGMDLSGLLPKYINIRRGCYVGLILGMALCPWELLASATTFVSVISSFSIFMAPFCGIHISDYWFIRQRRLKLSDLYHARPEGIYFYTMGFNWRGVLPWLVGWVPLLPGFMHSINPAIKVSVGADHLYALGFPYGLLSSMAIHTLVNKCFPPPGIGEIDRDDTYGTFTVEEAAKLGVNKDSTEEDSDRSLRRESREVVETKV</sequence>
<protein>
    <recommendedName>
        <fullName evidence="3">Transporter aclS</fullName>
    </recommendedName>
    <alternativeName>
        <fullName evidence="3">Aspirochlorine biosynthesis protein S</fullName>
    </alternativeName>
</protein>
<proteinExistence type="inferred from homology"/>
<reference key="1">
    <citation type="journal article" date="2005" name="Nature">
        <title>Genome sequencing and analysis of Aspergillus oryzae.</title>
        <authorList>
            <person name="Machida M."/>
            <person name="Asai K."/>
            <person name="Sano M."/>
            <person name="Tanaka T."/>
            <person name="Kumagai T."/>
            <person name="Terai G."/>
            <person name="Kusumoto K."/>
            <person name="Arima T."/>
            <person name="Akita O."/>
            <person name="Kashiwagi Y."/>
            <person name="Abe K."/>
            <person name="Gomi K."/>
            <person name="Horiuchi H."/>
            <person name="Kitamoto K."/>
            <person name="Kobayashi T."/>
            <person name="Takeuchi M."/>
            <person name="Denning D.W."/>
            <person name="Galagan J.E."/>
            <person name="Nierman W.C."/>
            <person name="Yu J."/>
            <person name="Archer D.B."/>
            <person name="Bennett J.W."/>
            <person name="Bhatnagar D."/>
            <person name="Cleveland T.E."/>
            <person name="Fedorova N.D."/>
            <person name="Gotoh O."/>
            <person name="Horikawa H."/>
            <person name="Hosoyama A."/>
            <person name="Ichinomiya M."/>
            <person name="Igarashi R."/>
            <person name="Iwashita K."/>
            <person name="Juvvadi P.R."/>
            <person name="Kato M."/>
            <person name="Kato Y."/>
            <person name="Kin T."/>
            <person name="Kokubun A."/>
            <person name="Maeda H."/>
            <person name="Maeyama N."/>
            <person name="Maruyama J."/>
            <person name="Nagasaki H."/>
            <person name="Nakajima T."/>
            <person name="Oda K."/>
            <person name="Okada K."/>
            <person name="Paulsen I."/>
            <person name="Sakamoto K."/>
            <person name="Sawano T."/>
            <person name="Takahashi M."/>
            <person name="Takase K."/>
            <person name="Terabayashi Y."/>
            <person name="Wortman J.R."/>
            <person name="Yamada O."/>
            <person name="Yamagata Y."/>
            <person name="Anazawa H."/>
            <person name="Hata Y."/>
            <person name="Koide Y."/>
            <person name="Komori T."/>
            <person name="Koyama Y."/>
            <person name="Minetoki T."/>
            <person name="Suharnan S."/>
            <person name="Tanaka A."/>
            <person name="Isono K."/>
            <person name="Kuhara S."/>
            <person name="Ogasawara N."/>
            <person name="Kikuchi H."/>
        </authorList>
    </citation>
    <scope>NUCLEOTIDE SEQUENCE [LARGE SCALE GENOMIC DNA]</scope>
    <source>
        <strain>ATCC 42149 / RIB 40</strain>
    </source>
</reference>
<reference key="2">
    <citation type="journal article" date="2014" name="Angew. Chem. Int. Ed.">
        <title>Biosynthesis of the halogenated mycotoxin aspirochlorine in koji mold involves a cryptic amino acid conversion.</title>
        <authorList>
            <person name="Chankhamjon P."/>
            <person name="Boettger-Schmidt D."/>
            <person name="Scherlach K."/>
            <person name="Urbansky B."/>
            <person name="Lackner G."/>
            <person name="Kalb D."/>
            <person name="Dahse H.M."/>
            <person name="Hoffmeister D."/>
            <person name="Hertweck C."/>
        </authorList>
    </citation>
    <scope>FUNCTION</scope>
</reference>
<evidence type="ECO:0000255" key="1"/>
<evidence type="ECO:0000256" key="2">
    <source>
        <dbReference type="SAM" id="MobiDB-lite"/>
    </source>
</evidence>
<evidence type="ECO:0000303" key="3">
    <source>
    </source>
</evidence>
<evidence type="ECO:0000305" key="4"/>
<evidence type="ECO:0000305" key="5">
    <source>
    </source>
</evidence>
<organism>
    <name type="scientific">Aspergillus oryzae (strain ATCC 42149 / RIB 40)</name>
    <name type="common">Yellow koji mold</name>
    <dbReference type="NCBI Taxonomy" id="510516"/>
    <lineage>
        <taxon>Eukaryota</taxon>
        <taxon>Fungi</taxon>
        <taxon>Dikarya</taxon>
        <taxon>Ascomycota</taxon>
        <taxon>Pezizomycotina</taxon>
        <taxon>Eurotiomycetes</taxon>
        <taxon>Eurotiomycetidae</taxon>
        <taxon>Eurotiales</taxon>
        <taxon>Aspergillaceae</taxon>
        <taxon>Aspergillus</taxon>
        <taxon>Aspergillus subgen. Circumdati</taxon>
    </lineage>
</organism>
<comment type="function">
    <text evidence="5">Transporter; part of the gene cluster that mediates the biosynthesis of aspirochlorine (or antibiotic A30641), an unusual halogenated spiro compound with distinctive antifungal properties due to selective inhibition of protein biosynthesis, and which is also active against bacteria, viruses, and murine tumor cells (PubMed:25302411).</text>
</comment>
<comment type="subcellular location">
    <subcellularLocation>
        <location evidence="1">Membrane</location>
        <topology evidence="1">Multi-pass membrane protein</topology>
    </subcellularLocation>
</comment>
<comment type="similarity">
    <text evidence="4">Belongs to the purine-cytosine permease (2.A.39) family.</text>
</comment>
<gene>
    <name evidence="3" type="primary">aclS</name>
    <name type="ORF">AO090001000044</name>
</gene>
<dbReference type="EMBL" id="BA000050">
    <property type="protein sequence ID" value="BAE56607.1"/>
    <property type="molecule type" value="Genomic_DNA"/>
</dbReference>
<dbReference type="SMR" id="Q2UPA8"/>
<dbReference type="EnsemblFungi" id="BAE56607">
    <property type="protein sequence ID" value="BAE56607"/>
    <property type="gene ID" value="AO090001000044"/>
</dbReference>
<dbReference type="VEuPathDB" id="FungiDB:AO090001000044"/>
<dbReference type="HOGENOM" id="CLU_021555_3_0_1"/>
<dbReference type="OMA" id="QVFGQWF"/>
<dbReference type="Proteomes" id="UP000006564">
    <property type="component" value="Chromosome 2"/>
</dbReference>
<dbReference type="GO" id="GO:0005886">
    <property type="term" value="C:plasma membrane"/>
    <property type="evidence" value="ECO:0007669"/>
    <property type="project" value="TreeGrafter"/>
</dbReference>
<dbReference type="GO" id="GO:0015205">
    <property type="term" value="F:nucleobase transmembrane transporter activity"/>
    <property type="evidence" value="ECO:0007669"/>
    <property type="project" value="TreeGrafter"/>
</dbReference>
<dbReference type="CDD" id="cd11482">
    <property type="entry name" value="SLC-NCS1sbd_NRT1-like"/>
    <property type="match status" value="1"/>
</dbReference>
<dbReference type="Gene3D" id="1.10.4160.10">
    <property type="entry name" value="Hydantoin permease"/>
    <property type="match status" value="1"/>
</dbReference>
<dbReference type="InterPro" id="IPR001248">
    <property type="entry name" value="Pur-cyt_permease"/>
</dbReference>
<dbReference type="InterPro" id="IPR045225">
    <property type="entry name" value="Uracil/uridine/allantoin_perm"/>
</dbReference>
<dbReference type="PANTHER" id="PTHR30618:SF4">
    <property type="entry name" value="ALLANTOIN PERMEASE"/>
    <property type="match status" value="1"/>
</dbReference>
<dbReference type="PANTHER" id="PTHR30618">
    <property type="entry name" value="NCS1 FAMILY PURINE/PYRIMIDINE TRANSPORTER"/>
    <property type="match status" value="1"/>
</dbReference>
<dbReference type="Pfam" id="PF02133">
    <property type="entry name" value="Transp_cyt_pur"/>
    <property type="match status" value="3"/>
</dbReference>
<accession>Q2UPA8</accession>
<name>ACLS_ASPOR</name>